<reference key="1">
    <citation type="submission" date="2003-03" db="EMBL/GenBank/DDBJ databases">
        <title>The complete genome sequence of Neisseria gonorrhoeae.</title>
        <authorList>
            <person name="Lewis L.A."/>
            <person name="Gillaspy A.F."/>
            <person name="McLaughlin R.E."/>
            <person name="Gipson M."/>
            <person name="Ducey T.F."/>
            <person name="Ownbey T."/>
            <person name="Hartman K."/>
            <person name="Nydick C."/>
            <person name="Carson M.B."/>
            <person name="Vaughn J."/>
            <person name="Thomson C."/>
            <person name="Song L."/>
            <person name="Lin S."/>
            <person name="Yuan X."/>
            <person name="Najar F."/>
            <person name="Zhan M."/>
            <person name="Ren Q."/>
            <person name="Zhu H."/>
            <person name="Qi S."/>
            <person name="Kenton S.M."/>
            <person name="Lai H."/>
            <person name="White J.D."/>
            <person name="Clifton S."/>
            <person name="Roe B.A."/>
            <person name="Dyer D.W."/>
        </authorList>
    </citation>
    <scope>NUCLEOTIDE SEQUENCE [LARGE SCALE GENOMIC DNA]</scope>
    <source>
        <strain>ATCC 700825 / FA 1090</strain>
    </source>
</reference>
<organism>
    <name type="scientific">Neisseria gonorrhoeae (strain ATCC 700825 / FA 1090)</name>
    <dbReference type="NCBI Taxonomy" id="242231"/>
    <lineage>
        <taxon>Bacteria</taxon>
        <taxon>Pseudomonadati</taxon>
        <taxon>Pseudomonadota</taxon>
        <taxon>Betaproteobacteria</taxon>
        <taxon>Neisseriales</taxon>
        <taxon>Neisseriaceae</taxon>
        <taxon>Neisseria</taxon>
    </lineage>
</organism>
<dbReference type="EC" id="2.1.1.-" evidence="1"/>
<dbReference type="EC" id="2.1.1.35" evidence="1"/>
<dbReference type="EMBL" id="AE004969">
    <property type="protein sequence ID" value="AAW89980.1"/>
    <property type="molecule type" value="Genomic_DNA"/>
</dbReference>
<dbReference type="RefSeq" id="WP_003691661.1">
    <property type="nucleotide sequence ID" value="NC_002946.2"/>
</dbReference>
<dbReference type="RefSeq" id="YP_208392.1">
    <property type="nucleotide sequence ID" value="NC_002946.2"/>
</dbReference>
<dbReference type="SMR" id="Q5F757"/>
<dbReference type="STRING" id="242231.NGO_1330"/>
<dbReference type="GeneID" id="66753532"/>
<dbReference type="KEGG" id="ngo:NGO_1330"/>
<dbReference type="PATRIC" id="fig|242231.10.peg.1564"/>
<dbReference type="HOGENOM" id="CLU_043022_0_0_4"/>
<dbReference type="Proteomes" id="UP000000535">
    <property type="component" value="Chromosome"/>
</dbReference>
<dbReference type="GO" id="GO:0005829">
    <property type="term" value="C:cytosol"/>
    <property type="evidence" value="ECO:0007669"/>
    <property type="project" value="TreeGrafter"/>
</dbReference>
<dbReference type="GO" id="GO:0019843">
    <property type="term" value="F:rRNA binding"/>
    <property type="evidence" value="ECO:0007669"/>
    <property type="project" value="TreeGrafter"/>
</dbReference>
<dbReference type="GO" id="GO:0030697">
    <property type="term" value="F:tRNA (uracil(54)-C5)-methyltransferase activity, S-adenosyl methionine-dependent"/>
    <property type="evidence" value="ECO:0007669"/>
    <property type="project" value="UniProtKB-UniRule"/>
</dbReference>
<dbReference type="GO" id="GO:0000049">
    <property type="term" value="F:tRNA binding"/>
    <property type="evidence" value="ECO:0007669"/>
    <property type="project" value="TreeGrafter"/>
</dbReference>
<dbReference type="GO" id="GO:0030488">
    <property type="term" value="P:tRNA methylation"/>
    <property type="evidence" value="ECO:0007669"/>
    <property type="project" value="UniProtKB-UniRule"/>
</dbReference>
<dbReference type="CDD" id="cd02440">
    <property type="entry name" value="AdoMet_MTases"/>
    <property type="match status" value="1"/>
</dbReference>
<dbReference type="FunFam" id="2.40.50.1070:FF:000001">
    <property type="entry name" value="tRNA/tmRNA (uracil-C(5))-methyltransferase"/>
    <property type="match status" value="1"/>
</dbReference>
<dbReference type="FunFam" id="3.40.50.150:FF:000012">
    <property type="entry name" value="tRNA/tmRNA (uracil-C(5))-methyltransferase"/>
    <property type="match status" value="1"/>
</dbReference>
<dbReference type="Gene3D" id="2.40.50.1070">
    <property type="match status" value="1"/>
</dbReference>
<dbReference type="Gene3D" id="3.40.50.150">
    <property type="entry name" value="Vaccinia Virus protein VP39"/>
    <property type="match status" value="1"/>
</dbReference>
<dbReference type="HAMAP" id="MF_01011">
    <property type="entry name" value="RNA_methyltr_TrmA"/>
    <property type="match status" value="1"/>
</dbReference>
<dbReference type="InterPro" id="IPR030390">
    <property type="entry name" value="MeTrfase_TrmA_AS"/>
</dbReference>
<dbReference type="InterPro" id="IPR029063">
    <property type="entry name" value="SAM-dependent_MTases_sf"/>
</dbReference>
<dbReference type="InterPro" id="IPR011869">
    <property type="entry name" value="TrmA_MeTrfase"/>
</dbReference>
<dbReference type="InterPro" id="IPR010280">
    <property type="entry name" value="U5_MeTrfase_fam"/>
</dbReference>
<dbReference type="NCBIfam" id="TIGR02143">
    <property type="entry name" value="trmA_only"/>
    <property type="match status" value="1"/>
</dbReference>
<dbReference type="PANTHER" id="PTHR47790">
    <property type="entry name" value="TRNA/TMRNA (URACIL-C(5))-METHYLTRANSFERASE"/>
    <property type="match status" value="1"/>
</dbReference>
<dbReference type="PANTHER" id="PTHR47790:SF2">
    <property type="entry name" value="TRNA_TMRNA (URACIL-C(5))-METHYLTRANSFERASE"/>
    <property type="match status" value="1"/>
</dbReference>
<dbReference type="Pfam" id="PF05958">
    <property type="entry name" value="tRNA_U5-meth_tr"/>
    <property type="match status" value="1"/>
</dbReference>
<dbReference type="SUPFAM" id="SSF53335">
    <property type="entry name" value="S-adenosyl-L-methionine-dependent methyltransferases"/>
    <property type="match status" value="1"/>
</dbReference>
<dbReference type="PROSITE" id="PS51687">
    <property type="entry name" value="SAM_MT_RNA_M5U"/>
    <property type="match status" value="1"/>
</dbReference>
<dbReference type="PROSITE" id="PS01230">
    <property type="entry name" value="TRMA_1"/>
    <property type="match status" value="1"/>
</dbReference>
<proteinExistence type="inferred from homology"/>
<feature type="chain" id="PRO_0000281447" description="tRNA/tmRNA (uracil-C(5))-methyltransferase">
    <location>
        <begin position="1"/>
        <end position="362"/>
    </location>
</feature>
<feature type="active site" description="Nucleophile" evidence="1">
    <location>
        <position position="318"/>
    </location>
</feature>
<feature type="active site" description="Proton acceptor" evidence="1">
    <location>
        <position position="352"/>
    </location>
</feature>
<feature type="binding site" evidence="1">
    <location>
        <position position="182"/>
    </location>
    <ligand>
        <name>S-adenosyl-L-methionine</name>
        <dbReference type="ChEBI" id="CHEBI:59789"/>
    </ligand>
</feature>
<feature type="binding site" evidence="1">
    <location>
        <position position="210"/>
    </location>
    <ligand>
        <name>S-adenosyl-L-methionine</name>
        <dbReference type="ChEBI" id="CHEBI:59789"/>
    </ligand>
</feature>
<feature type="binding site" evidence="1">
    <location>
        <position position="215"/>
    </location>
    <ligand>
        <name>S-adenosyl-L-methionine</name>
        <dbReference type="ChEBI" id="CHEBI:59789"/>
    </ligand>
</feature>
<feature type="binding site" evidence="1">
    <location>
        <position position="231"/>
    </location>
    <ligand>
        <name>S-adenosyl-L-methionine</name>
        <dbReference type="ChEBI" id="CHEBI:59789"/>
    </ligand>
</feature>
<feature type="binding site" evidence="1">
    <location>
        <position position="293"/>
    </location>
    <ligand>
        <name>S-adenosyl-L-methionine</name>
        <dbReference type="ChEBI" id="CHEBI:59789"/>
    </ligand>
</feature>
<gene>
    <name evidence="1" type="primary">trmA</name>
    <name type="ordered locus">NGO_1330</name>
</gene>
<keyword id="KW-0489">Methyltransferase</keyword>
<keyword id="KW-1185">Reference proteome</keyword>
<keyword id="KW-0949">S-adenosyl-L-methionine</keyword>
<keyword id="KW-0808">Transferase</keyword>
<keyword id="KW-0819">tRNA processing</keyword>
<evidence type="ECO:0000255" key="1">
    <source>
        <dbReference type="HAMAP-Rule" id="MF_01011"/>
    </source>
</evidence>
<accession>Q5F757</accession>
<sequence length="362" mass="41306">MNDYTQQLQGKKDYLKTLFAGLDVPEWEVYESPDKHYRMRAEFRIWHEGGEMFYAMFEKGQKASGASLIRCDRFDAASEAVNCLMPELIAVAAQSAELRNHWYAVEFLSTLSGEMLVTMIYHKRLDDEWMKAAQALQQQLDISVIGRSRGQKIVLKQDYVTETLRVGDRDFHYRQIEGSFTQPNAAVCRKMLEWACRAAEGLGGDLLELYCGNGNFTLPLSRYFRQVLATEISKTSVSAAQWNIEANWIGNIKIARLSAEEFTEAYTGKREFTRLKESGIVLTDYAFSTIFVDPPRAGIDEETLKLVSQFDNIIYISCNPETLRANLDTLTETHTVGRAALFDQFPFTHHIESGVLLKKKIL</sequence>
<name>TRMA_NEIG1</name>
<protein>
    <recommendedName>
        <fullName evidence="1">tRNA/tmRNA (uracil-C(5))-methyltransferase</fullName>
        <ecNumber evidence="1">2.1.1.-</ecNumber>
        <ecNumber evidence="1">2.1.1.35</ecNumber>
    </recommendedName>
    <alternativeName>
        <fullName evidence="1">tRNA (uracil(54)-C(5))-methyltransferase</fullName>
    </alternativeName>
    <alternativeName>
        <fullName evidence="1">tRNA(m5U54)-methyltransferase</fullName>
        <shortName evidence="1">RUMT</shortName>
    </alternativeName>
    <alternativeName>
        <fullName evidence="1">tmRNA (uracil(341)-C(5))-methyltransferase</fullName>
    </alternativeName>
</protein>
<comment type="function">
    <text evidence="1">Dual-specificity methyltransferase that catalyzes the formation of 5-methyluridine at position 54 (m5U54) in all tRNAs, and that of position 341 (m5U341) in tmRNA (transfer-mRNA).</text>
</comment>
<comment type="catalytic activity">
    <reaction evidence="1">
        <text>uridine(54) in tRNA + S-adenosyl-L-methionine = 5-methyluridine(54) in tRNA + S-adenosyl-L-homocysteine + H(+)</text>
        <dbReference type="Rhea" id="RHEA:42712"/>
        <dbReference type="Rhea" id="RHEA-COMP:10167"/>
        <dbReference type="Rhea" id="RHEA-COMP:10193"/>
        <dbReference type="ChEBI" id="CHEBI:15378"/>
        <dbReference type="ChEBI" id="CHEBI:57856"/>
        <dbReference type="ChEBI" id="CHEBI:59789"/>
        <dbReference type="ChEBI" id="CHEBI:65315"/>
        <dbReference type="ChEBI" id="CHEBI:74447"/>
        <dbReference type="EC" id="2.1.1.35"/>
    </reaction>
</comment>
<comment type="catalytic activity">
    <reaction evidence="1">
        <text>uridine(341) in tmRNA + S-adenosyl-L-methionine = 5-methyluridine(341) in tmRNA + S-adenosyl-L-homocysteine + H(+)</text>
        <dbReference type="Rhea" id="RHEA:43612"/>
        <dbReference type="Rhea" id="RHEA-COMP:10630"/>
        <dbReference type="Rhea" id="RHEA-COMP:10631"/>
        <dbReference type="ChEBI" id="CHEBI:15378"/>
        <dbReference type="ChEBI" id="CHEBI:57856"/>
        <dbReference type="ChEBI" id="CHEBI:59789"/>
        <dbReference type="ChEBI" id="CHEBI:65315"/>
        <dbReference type="ChEBI" id="CHEBI:74447"/>
    </reaction>
</comment>
<comment type="similarity">
    <text evidence="1">Belongs to the class I-like SAM-binding methyltransferase superfamily. RNA M5U methyltransferase family. TrmA subfamily.</text>
</comment>